<feature type="chain" id="PRO_0000322072" description="Riboflavin kinase">
    <location>
        <begin position="1"/>
        <end position="127"/>
    </location>
</feature>
<feature type="binding site" evidence="1">
    <location>
        <begin position="10"/>
        <end position="15"/>
    </location>
    <ligand>
        <name>CDP</name>
        <dbReference type="ChEBI" id="CHEBI:58069"/>
    </ligand>
</feature>
<feature type="binding site" evidence="1">
    <location>
        <position position="39"/>
    </location>
    <ligand>
        <name>Mg(2+)</name>
        <dbReference type="ChEBI" id="CHEBI:18420"/>
    </ligand>
</feature>
<feature type="binding site" evidence="1">
    <location>
        <position position="41"/>
    </location>
    <ligand>
        <name>Mg(2+)</name>
        <dbReference type="ChEBI" id="CHEBI:18420"/>
    </ligand>
</feature>
<feature type="binding site" evidence="1">
    <location>
        <position position="96"/>
    </location>
    <ligand>
        <name>FMN</name>
        <dbReference type="ChEBI" id="CHEBI:58210"/>
    </ligand>
</feature>
<feature type="binding site" evidence="1">
    <location>
        <position position="104"/>
    </location>
    <ligand>
        <name>FMN</name>
        <dbReference type="ChEBI" id="CHEBI:58210"/>
    </ligand>
</feature>
<feature type="binding site" evidence="1">
    <location>
        <begin position="109"/>
        <end position="112"/>
    </location>
    <ligand>
        <name>CDP</name>
        <dbReference type="ChEBI" id="CHEBI:58069"/>
    </ligand>
</feature>
<organism>
    <name type="scientific">Methanococcus maripaludis (strain C5 / ATCC BAA-1333)</name>
    <dbReference type="NCBI Taxonomy" id="402880"/>
    <lineage>
        <taxon>Archaea</taxon>
        <taxon>Methanobacteriati</taxon>
        <taxon>Methanobacteriota</taxon>
        <taxon>Methanomada group</taxon>
        <taxon>Methanococci</taxon>
        <taxon>Methanococcales</taxon>
        <taxon>Methanococcaceae</taxon>
        <taxon>Methanococcus</taxon>
    </lineage>
</organism>
<sequence>MEIFGNVVSGLGEGRFFVGLTPYKNKFEELTGFIPFEGTLNVKLKHNFNLDNFNPIEFDGFEINGKRYFGGKVLLIKLFNKHGNFVNCAIVAPKKTDHSKKTLEIIAPIQLRKFLSLNNSNVVKIVI</sequence>
<protein>
    <recommendedName>
        <fullName evidence="1">Riboflavin kinase</fullName>
        <shortName evidence="1">RFK</shortName>
        <ecNumber evidence="1">2.7.1.161</ecNumber>
    </recommendedName>
    <alternativeName>
        <fullName evidence="1">CTP-dependent riboflavin kinase</fullName>
    </alternativeName>
    <alternativeName>
        <fullName evidence="1">CTP:riboflavin 5'-phosphotransferase</fullName>
    </alternativeName>
    <alternativeName>
        <fullName evidence="1">Flavokinase</fullName>
    </alternativeName>
</protein>
<proteinExistence type="inferred from homology"/>
<comment type="function">
    <text evidence="1">Catalyzes the CTP-dependent phosphorylation of riboflavin (vitamin B2) to form flavin mononucleotide (FMN).</text>
</comment>
<comment type="catalytic activity">
    <reaction evidence="1">
        <text>riboflavin + CTP = CDP + FMN + H(+)</text>
        <dbReference type="Rhea" id="RHEA:25021"/>
        <dbReference type="ChEBI" id="CHEBI:15378"/>
        <dbReference type="ChEBI" id="CHEBI:37563"/>
        <dbReference type="ChEBI" id="CHEBI:57986"/>
        <dbReference type="ChEBI" id="CHEBI:58069"/>
        <dbReference type="ChEBI" id="CHEBI:58210"/>
        <dbReference type="EC" id="2.7.1.161"/>
    </reaction>
</comment>
<comment type="cofactor">
    <cofactor evidence="1">
        <name>Mg(2+)</name>
        <dbReference type="ChEBI" id="CHEBI:18420"/>
    </cofactor>
    <text evidence="1">Binds 1 Mg(2+) ion per subunit.</text>
</comment>
<comment type="pathway">
    <text evidence="1">Cofactor biosynthesis; FMN biosynthesis; FMN from riboflavin (CTP route): step 1/1.</text>
</comment>
<comment type="similarity">
    <text evidence="1">Belongs to the archaeal riboflavin kinase family.</text>
</comment>
<comment type="sequence caution" evidence="2">
    <conflict type="erroneous initiation">
        <sequence resource="EMBL-CDS" id="ABO35789"/>
    </conflict>
</comment>
<reference key="1">
    <citation type="submission" date="2007-03" db="EMBL/GenBank/DDBJ databases">
        <title>Complete sequence of chromosome of Methanococcus maripaludis C5.</title>
        <authorList>
            <consortium name="US DOE Joint Genome Institute"/>
            <person name="Copeland A."/>
            <person name="Lucas S."/>
            <person name="Lapidus A."/>
            <person name="Barry K."/>
            <person name="Glavina del Rio T."/>
            <person name="Dalin E."/>
            <person name="Tice H."/>
            <person name="Pitluck S."/>
            <person name="Chertkov O."/>
            <person name="Brettin T."/>
            <person name="Bruce D."/>
            <person name="Han C."/>
            <person name="Detter J.C."/>
            <person name="Schmutz J."/>
            <person name="Larimer F."/>
            <person name="Land M."/>
            <person name="Hauser L."/>
            <person name="Kyrpides N."/>
            <person name="Mikhailova N."/>
            <person name="Sieprawska-Lupa M."/>
            <person name="Whitman W.B."/>
            <person name="Richardson P."/>
        </authorList>
    </citation>
    <scope>NUCLEOTIDE SEQUENCE [LARGE SCALE GENOMIC DNA]</scope>
    <source>
        <strain>C5 / ATCC BAA-1333</strain>
    </source>
</reference>
<evidence type="ECO:0000255" key="1">
    <source>
        <dbReference type="HAMAP-Rule" id="MF_01285"/>
    </source>
</evidence>
<evidence type="ECO:0000305" key="2"/>
<accession>A4G005</accession>
<name>RIFK_METM5</name>
<gene>
    <name evidence="1" type="primary">ribK</name>
    <name type="ordered locus">MmarC5_1492</name>
</gene>
<keyword id="KW-0285">Flavoprotein</keyword>
<keyword id="KW-0288">FMN</keyword>
<keyword id="KW-0418">Kinase</keyword>
<keyword id="KW-0460">Magnesium</keyword>
<keyword id="KW-0479">Metal-binding</keyword>
<keyword id="KW-0547">Nucleotide-binding</keyword>
<keyword id="KW-0808">Transferase</keyword>
<dbReference type="EC" id="2.7.1.161" evidence="1"/>
<dbReference type="EMBL" id="CP000609">
    <property type="protein sequence ID" value="ABO35789.1"/>
    <property type="status" value="ALT_INIT"/>
    <property type="molecule type" value="Genomic_DNA"/>
</dbReference>
<dbReference type="RefSeq" id="WP_048058521.1">
    <property type="nucleotide sequence ID" value="NC_009135.1"/>
</dbReference>
<dbReference type="SMR" id="A4G005"/>
<dbReference type="STRING" id="402880.MmarC5_1492"/>
<dbReference type="GeneID" id="4927757"/>
<dbReference type="KEGG" id="mmq:MmarC5_1492"/>
<dbReference type="eggNOG" id="arCOG01904">
    <property type="taxonomic scope" value="Archaea"/>
</dbReference>
<dbReference type="HOGENOM" id="CLU_140165_0_0_2"/>
<dbReference type="OrthoDB" id="30955at2157"/>
<dbReference type="UniPathway" id="UPA00276">
    <property type="reaction ID" value="UER00929"/>
</dbReference>
<dbReference type="Proteomes" id="UP000000253">
    <property type="component" value="Chromosome"/>
</dbReference>
<dbReference type="GO" id="GO:0000287">
    <property type="term" value="F:magnesium ion binding"/>
    <property type="evidence" value="ECO:0007669"/>
    <property type="project" value="UniProtKB-UniRule"/>
</dbReference>
<dbReference type="GO" id="GO:0000166">
    <property type="term" value="F:nucleotide binding"/>
    <property type="evidence" value="ECO:0007669"/>
    <property type="project" value="UniProtKB-UniRule"/>
</dbReference>
<dbReference type="GO" id="GO:0008531">
    <property type="term" value="F:riboflavin kinase activity"/>
    <property type="evidence" value="ECO:0007669"/>
    <property type="project" value="InterPro"/>
</dbReference>
<dbReference type="GO" id="GO:0009398">
    <property type="term" value="P:FMN biosynthetic process"/>
    <property type="evidence" value="ECO:0007669"/>
    <property type="project" value="UniProtKB-UniRule"/>
</dbReference>
<dbReference type="GO" id="GO:0009231">
    <property type="term" value="P:riboflavin biosynthetic process"/>
    <property type="evidence" value="ECO:0007669"/>
    <property type="project" value="InterPro"/>
</dbReference>
<dbReference type="Gene3D" id="2.40.30.30">
    <property type="entry name" value="Riboflavin kinase-like"/>
    <property type="match status" value="1"/>
</dbReference>
<dbReference type="HAMAP" id="MF_01285">
    <property type="entry name" value="Riboflavin_kinase"/>
    <property type="match status" value="1"/>
</dbReference>
<dbReference type="InterPro" id="IPR053397">
    <property type="entry name" value="Archaeal_Riboflavin_Kinase"/>
</dbReference>
<dbReference type="InterPro" id="IPR039063">
    <property type="entry name" value="RibK_CTP-dep"/>
</dbReference>
<dbReference type="InterPro" id="IPR023470">
    <property type="entry name" value="Riboflavin_kinase_archaeal"/>
</dbReference>
<dbReference type="InterPro" id="IPR023602">
    <property type="entry name" value="Riboflavin_kinase_CTP-dep"/>
</dbReference>
<dbReference type="InterPro" id="IPR023465">
    <property type="entry name" value="Riboflavin_kinase_dom_sf"/>
</dbReference>
<dbReference type="NCBIfam" id="NF040694">
    <property type="entry name" value="ribK_Meth"/>
    <property type="match status" value="1"/>
</dbReference>
<dbReference type="PANTHER" id="PTHR40706">
    <property type="entry name" value="RIBOFLAVIN KINASE"/>
    <property type="match status" value="1"/>
</dbReference>
<dbReference type="PANTHER" id="PTHR40706:SF1">
    <property type="entry name" value="RIBOFLAVIN KINASE"/>
    <property type="match status" value="1"/>
</dbReference>
<dbReference type="Pfam" id="PF01982">
    <property type="entry name" value="CTP-dep_RFKase"/>
    <property type="match status" value="1"/>
</dbReference>
<dbReference type="SUPFAM" id="SSF82114">
    <property type="entry name" value="Riboflavin kinase-like"/>
    <property type="match status" value="1"/>
</dbReference>